<proteinExistence type="inferred from homology"/>
<evidence type="ECO:0000255" key="1">
    <source>
        <dbReference type="HAMAP-Rule" id="MF_01013"/>
    </source>
</evidence>
<feature type="chain" id="PRO_1000135012" description="Imidazole glycerol phosphate synthase subunit HisF">
    <location>
        <begin position="1"/>
        <end position="252"/>
    </location>
</feature>
<feature type="active site" evidence="1">
    <location>
        <position position="11"/>
    </location>
</feature>
<feature type="active site" evidence="1">
    <location>
        <position position="130"/>
    </location>
</feature>
<reference key="1">
    <citation type="submission" date="2008-06" db="EMBL/GenBank/DDBJ databases">
        <title>Lactobacillus casei BL23 complete genome sequence.</title>
        <authorList>
            <person name="Maze A."/>
            <person name="Boel G."/>
            <person name="Bourand A."/>
            <person name="Loux V."/>
            <person name="Gibrat J.F."/>
            <person name="Zuniga M."/>
            <person name="Hartke A."/>
            <person name="Deutscher J."/>
        </authorList>
    </citation>
    <scope>NUCLEOTIDE SEQUENCE [LARGE SCALE GENOMIC DNA]</scope>
    <source>
        <strain>BL23</strain>
    </source>
</reference>
<sequence length="252" mass="26413">MLTKRIIPCLDVDHGRVKKGINFVQLKDVGDPVAIAKAYQEQGADELVFLDITATNEARGTLVQTVEAVANQVFMPLTVGGGIQSVADMHALLRAGADKVSLNSAAVADPSLLTAGAEKFGRQAIVAAIDTRWQADQNRYQVTVNGGRTSVDLDAITWAKQAVAAGAGELLVTSMDADGTESGFDLRLHQQLTAAVQVPIIASGGAGSTTDFVQLFTQTTVSAGLAASIFHFGELTVPQVKTALKQAKVAVR</sequence>
<comment type="function">
    <text evidence="1">IGPS catalyzes the conversion of PRFAR and glutamine to IGP, AICAR and glutamate. The HisF subunit catalyzes the cyclization activity that produces IGP and AICAR from PRFAR using the ammonia provided by the HisH subunit.</text>
</comment>
<comment type="catalytic activity">
    <reaction evidence="1">
        <text>5-[(5-phospho-1-deoxy-D-ribulos-1-ylimino)methylamino]-1-(5-phospho-beta-D-ribosyl)imidazole-4-carboxamide + L-glutamine = D-erythro-1-(imidazol-4-yl)glycerol 3-phosphate + 5-amino-1-(5-phospho-beta-D-ribosyl)imidazole-4-carboxamide + L-glutamate + H(+)</text>
        <dbReference type="Rhea" id="RHEA:24793"/>
        <dbReference type="ChEBI" id="CHEBI:15378"/>
        <dbReference type="ChEBI" id="CHEBI:29985"/>
        <dbReference type="ChEBI" id="CHEBI:58278"/>
        <dbReference type="ChEBI" id="CHEBI:58359"/>
        <dbReference type="ChEBI" id="CHEBI:58475"/>
        <dbReference type="ChEBI" id="CHEBI:58525"/>
        <dbReference type="EC" id="4.3.2.10"/>
    </reaction>
</comment>
<comment type="pathway">
    <text evidence="1">Amino-acid biosynthesis; L-histidine biosynthesis; L-histidine from 5-phospho-alpha-D-ribose 1-diphosphate: step 5/9.</text>
</comment>
<comment type="subunit">
    <text evidence="1">Heterodimer of HisH and HisF.</text>
</comment>
<comment type="subcellular location">
    <subcellularLocation>
        <location evidence="1">Cytoplasm</location>
    </subcellularLocation>
</comment>
<comment type="similarity">
    <text evidence="1">Belongs to the HisA/HisF family.</text>
</comment>
<protein>
    <recommendedName>
        <fullName evidence="1">Imidazole glycerol phosphate synthase subunit HisF</fullName>
        <ecNumber evidence="1">4.3.2.10</ecNumber>
    </recommendedName>
    <alternativeName>
        <fullName evidence="1">IGP synthase cyclase subunit</fullName>
    </alternativeName>
    <alternativeName>
        <fullName evidence="1">IGP synthase subunit HisF</fullName>
    </alternativeName>
    <alternativeName>
        <fullName evidence="1">ImGP synthase subunit HisF</fullName>
        <shortName evidence="1">IGPS subunit HisF</shortName>
    </alternativeName>
</protein>
<organism>
    <name type="scientific">Lacticaseibacillus casei (strain BL23)</name>
    <name type="common">Lactobacillus casei</name>
    <dbReference type="NCBI Taxonomy" id="543734"/>
    <lineage>
        <taxon>Bacteria</taxon>
        <taxon>Bacillati</taxon>
        <taxon>Bacillota</taxon>
        <taxon>Bacilli</taxon>
        <taxon>Lactobacillales</taxon>
        <taxon>Lactobacillaceae</taxon>
        <taxon>Lacticaseibacillus</taxon>
    </lineage>
</organism>
<accession>B3WED1</accession>
<name>HIS6_LACCB</name>
<dbReference type="EC" id="4.3.2.10" evidence="1"/>
<dbReference type="EMBL" id="FM177140">
    <property type="protein sequence ID" value="CAQ66732.1"/>
    <property type="molecule type" value="Genomic_DNA"/>
</dbReference>
<dbReference type="SMR" id="B3WED1"/>
<dbReference type="KEGG" id="lcb:LCABL_16510"/>
<dbReference type="HOGENOM" id="CLU_048577_4_0_9"/>
<dbReference type="UniPathway" id="UPA00031">
    <property type="reaction ID" value="UER00010"/>
</dbReference>
<dbReference type="GO" id="GO:0005737">
    <property type="term" value="C:cytoplasm"/>
    <property type="evidence" value="ECO:0007669"/>
    <property type="project" value="UniProtKB-SubCell"/>
</dbReference>
<dbReference type="GO" id="GO:0000107">
    <property type="term" value="F:imidazoleglycerol-phosphate synthase activity"/>
    <property type="evidence" value="ECO:0007669"/>
    <property type="project" value="UniProtKB-UniRule"/>
</dbReference>
<dbReference type="GO" id="GO:0016829">
    <property type="term" value="F:lyase activity"/>
    <property type="evidence" value="ECO:0007669"/>
    <property type="project" value="UniProtKB-KW"/>
</dbReference>
<dbReference type="GO" id="GO:0000105">
    <property type="term" value="P:L-histidine biosynthetic process"/>
    <property type="evidence" value="ECO:0007669"/>
    <property type="project" value="UniProtKB-UniRule"/>
</dbReference>
<dbReference type="CDD" id="cd04731">
    <property type="entry name" value="HisF"/>
    <property type="match status" value="1"/>
</dbReference>
<dbReference type="Gene3D" id="3.20.20.70">
    <property type="entry name" value="Aldolase class I"/>
    <property type="match status" value="1"/>
</dbReference>
<dbReference type="HAMAP" id="MF_01013">
    <property type="entry name" value="HisF"/>
    <property type="match status" value="1"/>
</dbReference>
<dbReference type="InterPro" id="IPR013785">
    <property type="entry name" value="Aldolase_TIM"/>
</dbReference>
<dbReference type="InterPro" id="IPR006062">
    <property type="entry name" value="His_biosynth"/>
</dbReference>
<dbReference type="InterPro" id="IPR004651">
    <property type="entry name" value="HisF"/>
</dbReference>
<dbReference type="InterPro" id="IPR050064">
    <property type="entry name" value="IGPS_HisA/HisF"/>
</dbReference>
<dbReference type="InterPro" id="IPR011060">
    <property type="entry name" value="RibuloseP-bd_barrel"/>
</dbReference>
<dbReference type="NCBIfam" id="TIGR00735">
    <property type="entry name" value="hisF"/>
    <property type="match status" value="1"/>
</dbReference>
<dbReference type="PANTHER" id="PTHR21235:SF2">
    <property type="entry name" value="IMIDAZOLE GLYCEROL PHOSPHATE SYNTHASE HISHF"/>
    <property type="match status" value="1"/>
</dbReference>
<dbReference type="PANTHER" id="PTHR21235">
    <property type="entry name" value="IMIDAZOLE GLYCEROL PHOSPHATE SYNTHASE SUBUNIT HISF/H IGP SYNTHASE SUBUNIT HISF/H"/>
    <property type="match status" value="1"/>
</dbReference>
<dbReference type="Pfam" id="PF00977">
    <property type="entry name" value="His_biosynth"/>
    <property type="match status" value="1"/>
</dbReference>
<dbReference type="SUPFAM" id="SSF51366">
    <property type="entry name" value="Ribulose-phoshate binding barrel"/>
    <property type="match status" value="1"/>
</dbReference>
<keyword id="KW-0028">Amino-acid biosynthesis</keyword>
<keyword id="KW-0963">Cytoplasm</keyword>
<keyword id="KW-0368">Histidine biosynthesis</keyword>
<keyword id="KW-0456">Lyase</keyword>
<gene>
    <name evidence="1" type="primary">hisF</name>
    <name type="ordered locus">LCABL_16510</name>
</gene>